<organism>
    <name type="scientific">Saccharopolyspora erythraea (strain ATCC 11635 / DSM 40517 / JCM 4748 / NBRC 13426 / NCIMB 8594 / NRRL 2338)</name>
    <dbReference type="NCBI Taxonomy" id="405948"/>
    <lineage>
        <taxon>Bacteria</taxon>
        <taxon>Bacillati</taxon>
        <taxon>Actinomycetota</taxon>
        <taxon>Actinomycetes</taxon>
        <taxon>Pseudonocardiales</taxon>
        <taxon>Pseudonocardiaceae</taxon>
        <taxon>Saccharopolyspora</taxon>
    </lineage>
</organism>
<protein>
    <recommendedName>
        <fullName evidence="1">Phosphoribosyl-ATP pyrophosphatase</fullName>
        <shortName evidence="1">PRA-PH</shortName>
        <ecNumber evidence="1">3.6.1.31</ecNumber>
    </recommendedName>
</protein>
<keyword id="KW-0028">Amino-acid biosynthesis</keyword>
<keyword id="KW-0067">ATP-binding</keyword>
<keyword id="KW-0963">Cytoplasm</keyword>
<keyword id="KW-0368">Histidine biosynthesis</keyword>
<keyword id="KW-0378">Hydrolase</keyword>
<keyword id="KW-0547">Nucleotide-binding</keyword>
<keyword id="KW-1185">Reference proteome</keyword>
<gene>
    <name evidence="1" type="primary">hisE</name>
    <name type="ordered locus">SACE_2237</name>
</gene>
<sequence>MKTFDELFAELQERARTRPEGSATVAALDAGVHAQGKKVIEEAGEVWIAAEYESDEALAEEISQLLYRLQVVMLGRGLSLEDVYRYL</sequence>
<evidence type="ECO:0000255" key="1">
    <source>
        <dbReference type="HAMAP-Rule" id="MF_01020"/>
    </source>
</evidence>
<proteinExistence type="inferred from homology"/>
<accession>A4FBW7</accession>
<name>HIS2_SACEN</name>
<dbReference type="EC" id="3.6.1.31" evidence="1"/>
<dbReference type="EMBL" id="AM420293">
    <property type="protein sequence ID" value="CAM01542.1"/>
    <property type="molecule type" value="Genomic_DNA"/>
</dbReference>
<dbReference type="RefSeq" id="WP_009945883.1">
    <property type="nucleotide sequence ID" value="NC_009142.1"/>
</dbReference>
<dbReference type="SMR" id="A4FBW7"/>
<dbReference type="STRING" id="405948.SACE_2237"/>
<dbReference type="KEGG" id="sen:SACE_2237"/>
<dbReference type="eggNOG" id="COG0140">
    <property type="taxonomic scope" value="Bacteria"/>
</dbReference>
<dbReference type="HOGENOM" id="CLU_123337_2_1_11"/>
<dbReference type="OrthoDB" id="3212875at2"/>
<dbReference type="UniPathway" id="UPA00031">
    <property type="reaction ID" value="UER00007"/>
</dbReference>
<dbReference type="Proteomes" id="UP000006728">
    <property type="component" value="Chromosome"/>
</dbReference>
<dbReference type="GO" id="GO:0005737">
    <property type="term" value="C:cytoplasm"/>
    <property type="evidence" value="ECO:0007669"/>
    <property type="project" value="UniProtKB-SubCell"/>
</dbReference>
<dbReference type="GO" id="GO:0005524">
    <property type="term" value="F:ATP binding"/>
    <property type="evidence" value="ECO:0007669"/>
    <property type="project" value="UniProtKB-KW"/>
</dbReference>
<dbReference type="GO" id="GO:0004636">
    <property type="term" value="F:phosphoribosyl-ATP diphosphatase activity"/>
    <property type="evidence" value="ECO:0007669"/>
    <property type="project" value="UniProtKB-UniRule"/>
</dbReference>
<dbReference type="GO" id="GO:0000105">
    <property type="term" value="P:L-histidine biosynthetic process"/>
    <property type="evidence" value="ECO:0007669"/>
    <property type="project" value="UniProtKB-UniRule"/>
</dbReference>
<dbReference type="CDD" id="cd11547">
    <property type="entry name" value="NTP-PPase_HisE"/>
    <property type="match status" value="1"/>
</dbReference>
<dbReference type="Gene3D" id="1.10.287.1080">
    <property type="entry name" value="MazG-like"/>
    <property type="match status" value="1"/>
</dbReference>
<dbReference type="HAMAP" id="MF_01020">
    <property type="entry name" value="HisE"/>
    <property type="match status" value="1"/>
</dbReference>
<dbReference type="InterPro" id="IPR008179">
    <property type="entry name" value="HisE"/>
</dbReference>
<dbReference type="InterPro" id="IPR021130">
    <property type="entry name" value="PRib-ATP_PPHydrolase-like"/>
</dbReference>
<dbReference type="NCBIfam" id="TIGR03188">
    <property type="entry name" value="histidine_hisI"/>
    <property type="match status" value="1"/>
</dbReference>
<dbReference type="NCBIfam" id="NF001610">
    <property type="entry name" value="PRK00400.1-1"/>
    <property type="match status" value="1"/>
</dbReference>
<dbReference type="PANTHER" id="PTHR42945">
    <property type="entry name" value="HISTIDINE BIOSYNTHESIS BIFUNCTIONAL PROTEIN"/>
    <property type="match status" value="1"/>
</dbReference>
<dbReference type="PANTHER" id="PTHR42945:SF1">
    <property type="entry name" value="HISTIDINE BIOSYNTHESIS BIFUNCTIONAL PROTEIN HIS7"/>
    <property type="match status" value="1"/>
</dbReference>
<dbReference type="Pfam" id="PF01503">
    <property type="entry name" value="PRA-PH"/>
    <property type="match status" value="1"/>
</dbReference>
<dbReference type="SUPFAM" id="SSF101386">
    <property type="entry name" value="all-alpha NTP pyrophosphatases"/>
    <property type="match status" value="1"/>
</dbReference>
<comment type="catalytic activity">
    <reaction evidence="1">
        <text>1-(5-phospho-beta-D-ribosyl)-ATP + H2O = 1-(5-phospho-beta-D-ribosyl)-5'-AMP + diphosphate + H(+)</text>
        <dbReference type="Rhea" id="RHEA:22828"/>
        <dbReference type="ChEBI" id="CHEBI:15377"/>
        <dbReference type="ChEBI" id="CHEBI:15378"/>
        <dbReference type="ChEBI" id="CHEBI:33019"/>
        <dbReference type="ChEBI" id="CHEBI:59457"/>
        <dbReference type="ChEBI" id="CHEBI:73183"/>
        <dbReference type="EC" id="3.6.1.31"/>
    </reaction>
</comment>
<comment type="pathway">
    <text evidence="1">Amino-acid biosynthesis; L-histidine biosynthesis; L-histidine from 5-phospho-alpha-D-ribose 1-diphosphate: step 2/9.</text>
</comment>
<comment type="subcellular location">
    <subcellularLocation>
        <location evidence="1">Cytoplasm</location>
    </subcellularLocation>
</comment>
<comment type="similarity">
    <text evidence="1">Belongs to the PRA-PH family.</text>
</comment>
<feature type="chain" id="PRO_1000063382" description="Phosphoribosyl-ATP pyrophosphatase">
    <location>
        <begin position="1"/>
        <end position="87"/>
    </location>
</feature>
<reference key="1">
    <citation type="journal article" date="2007" name="Nat. Biotechnol.">
        <title>Complete genome sequence of the erythromycin-producing bacterium Saccharopolyspora erythraea NRRL23338.</title>
        <authorList>
            <person name="Oliynyk M."/>
            <person name="Samborskyy M."/>
            <person name="Lester J.B."/>
            <person name="Mironenko T."/>
            <person name="Scott N."/>
            <person name="Dickens S."/>
            <person name="Haydock S.F."/>
            <person name="Leadlay P.F."/>
        </authorList>
    </citation>
    <scope>NUCLEOTIDE SEQUENCE [LARGE SCALE GENOMIC DNA]</scope>
    <source>
        <strain>ATCC 11635 / DSM 40517 / JCM 4748 / NBRC 13426 / NCIMB 8594 / NRRL 2338</strain>
    </source>
</reference>